<dbReference type="EMBL" id="DP000014">
    <property type="protein sequence ID" value="ABA90390.1"/>
    <property type="molecule type" value="Genomic_DNA"/>
</dbReference>
<dbReference type="RefSeq" id="XP_002751813.1">
    <property type="nucleotide sequence ID" value="XM_002751767.6"/>
</dbReference>
<dbReference type="FunCoup" id="Q2QLG6">
    <property type="interactions" value="1838"/>
</dbReference>
<dbReference type="STRING" id="9483.ENSCJAP00000074908"/>
<dbReference type="Ensembl" id="ENSCJAT00000115453.2">
    <property type="protein sequence ID" value="ENSCJAP00000074908.1"/>
    <property type="gene ID" value="ENSCJAG00000063550.2"/>
</dbReference>
<dbReference type="GeneID" id="100407940"/>
<dbReference type="KEGG" id="cjc:100407940"/>
<dbReference type="CTD" id="857"/>
<dbReference type="eggNOG" id="ENOG502QUK5">
    <property type="taxonomic scope" value="Eukaryota"/>
</dbReference>
<dbReference type="GeneTree" id="ENSGT00950000183006"/>
<dbReference type="HOGENOM" id="CLU_102582_0_0_1"/>
<dbReference type="InParanoid" id="Q2QLG6"/>
<dbReference type="OrthoDB" id="5917823at2759"/>
<dbReference type="TreeFam" id="TF315736"/>
<dbReference type="Proteomes" id="UP000008225">
    <property type="component" value="Chromosome 8"/>
</dbReference>
<dbReference type="Bgee" id="ENSCJAG00000063550">
    <property type="expression patterns" value="Expressed in heart and 6 other cell types or tissues"/>
</dbReference>
<dbReference type="GO" id="GO:0005901">
    <property type="term" value="C:caveola"/>
    <property type="evidence" value="ECO:0000250"/>
    <property type="project" value="UniProtKB"/>
</dbReference>
<dbReference type="GO" id="GO:0005768">
    <property type="term" value="C:endosome"/>
    <property type="evidence" value="ECO:0000250"/>
    <property type="project" value="UniProtKB"/>
</dbReference>
<dbReference type="GO" id="GO:0005925">
    <property type="term" value="C:focal adhesion"/>
    <property type="evidence" value="ECO:0007669"/>
    <property type="project" value="TreeGrafter"/>
</dbReference>
<dbReference type="GO" id="GO:0000139">
    <property type="term" value="C:Golgi membrane"/>
    <property type="evidence" value="ECO:0007669"/>
    <property type="project" value="UniProtKB-SubCell"/>
</dbReference>
<dbReference type="GO" id="GO:0045121">
    <property type="term" value="C:membrane raft"/>
    <property type="evidence" value="ECO:0000250"/>
    <property type="project" value="UniProtKB"/>
</dbReference>
<dbReference type="GO" id="GO:0048471">
    <property type="term" value="C:perinuclear region of cytoplasm"/>
    <property type="evidence" value="ECO:0007669"/>
    <property type="project" value="TreeGrafter"/>
</dbReference>
<dbReference type="GO" id="GO:0042383">
    <property type="term" value="C:sarcolemma"/>
    <property type="evidence" value="ECO:0007669"/>
    <property type="project" value="TreeGrafter"/>
</dbReference>
<dbReference type="GO" id="GO:0060090">
    <property type="term" value="F:molecular adaptor activity"/>
    <property type="evidence" value="ECO:0007669"/>
    <property type="project" value="TreeGrafter"/>
</dbReference>
<dbReference type="GO" id="GO:0008142">
    <property type="term" value="F:oxysterol binding"/>
    <property type="evidence" value="ECO:0000250"/>
    <property type="project" value="UniProtKB"/>
</dbReference>
<dbReference type="GO" id="GO:0019901">
    <property type="term" value="F:protein kinase binding"/>
    <property type="evidence" value="ECO:0007669"/>
    <property type="project" value="TreeGrafter"/>
</dbReference>
<dbReference type="GO" id="GO:0044325">
    <property type="term" value="F:transmembrane transporter binding"/>
    <property type="evidence" value="ECO:0007669"/>
    <property type="project" value="TreeGrafter"/>
</dbReference>
<dbReference type="GO" id="GO:0070836">
    <property type="term" value="P:caveola assembly"/>
    <property type="evidence" value="ECO:0007669"/>
    <property type="project" value="InterPro"/>
</dbReference>
<dbReference type="GO" id="GO:0030154">
    <property type="term" value="P:cell differentiation"/>
    <property type="evidence" value="ECO:0007669"/>
    <property type="project" value="TreeGrafter"/>
</dbReference>
<dbReference type="GO" id="GO:0001937">
    <property type="term" value="P:negative regulation of endothelial cell proliferation"/>
    <property type="evidence" value="ECO:0007669"/>
    <property type="project" value="TreeGrafter"/>
</dbReference>
<dbReference type="GO" id="GO:0031623">
    <property type="term" value="P:receptor internalization"/>
    <property type="evidence" value="ECO:0000250"/>
    <property type="project" value="UniProtKB"/>
</dbReference>
<dbReference type="GO" id="GO:0051480">
    <property type="term" value="P:regulation of cytosolic calcium ion concentration"/>
    <property type="evidence" value="ECO:0007669"/>
    <property type="project" value="TreeGrafter"/>
</dbReference>
<dbReference type="GO" id="GO:0031295">
    <property type="term" value="P:T cell costimulation"/>
    <property type="evidence" value="ECO:0000250"/>
    <property type="project" value="UniProtKB"/>
</dbReference>
<dbReference type="InterPro" id="IPR001612">
    <property type="entry name" value="Caveolin"/>
</dbReference>
<dbReference type="InterPro" id="IPR018361">
    <property type="entry name" value="Caveolin_CS"/>
</dbReference>
<dbReference type="PANTHER" id="PTHR10844">
    <property type="entry name" value="CAVEOLIN"/>
    <property type="match status" value="1"/>
</dbReference>
<dbReference type="PANTHER" id="PTHR10844:SF18">
    <property type="entry name" value="CAVEOLIN-1"/>
    <property type="match status" value="1"/>
</dbReference>
<dbReference type="Pfam" id="PF01146">
    <property type="entry name" value="Caveolin"/>
    <property type="match status" value="1"/>
</dbReference>
<dbReference type="PROSITE" id="PS01210">
    <property type="entry name" value="CAVEOLIN"/>
    <property type="match status" value="1"/>
</dbReference>
<sequence>MSGGKYVDSEGHLYTVPIREQGNIYKPNNKAMADELSEKQVYDAHTKEIDLVNRDPKHLNDDVVKIDFEDVIAEPEGTHSFDGIWKASFTTFTVTKYWFYRLLSALFGIPMALIWGIYFAILSFLHIWAVVPCIKSFLIEIQCISRVYSIYIHTVCDPLFEAIGKIFSNVRISLQKEI</sequence>
<gene>
    <name type="primary">CAV1</name>
</gene>
<accession>Q2QLG6</accession>
<feature type="initiator methionine" description="Removed" evidence="4">
    <location>
        <position position="1"/>
    </location>
</feature>
<feature type="chain" id="PRO_0000226330" description="Caveolin-1">
    <location>
        <begin position="2"/>
        <end position="178"/>
    </location>
</feature>
<feature type="topological domain" description="Cytoplasmic" evidence="6">
    <location>
        <begin position="2"/>
        <end position="104"/>
    </location>
</feature>
<feature type="intramembrane region" description="Helical" evidence="6">
    <location>
        <begin position="105"/>
        <end position="125"/>
    </location>
</feature>
<feature type="topological domain" description="Cytoplasmic" evidence="6">
    <location>
        <begin position="126"/>
        <end position="178"/>
    </location>
</feature>
<feature type="region of interest" description="Required for homooligomerization" evidence="4">
    <location>
        <begin position="2"/>
        <end position="94"/>
    </location>
</feature>
<feature type="region of interest" description="Interaction with CAVIN3" evidence="4">
    <location>
        <begin position="82"/>
        <end position="94"/>
    </location>
</feature>
<feature type="region of interest" description="Interacts with SPRY1, SPRY2, SPRY3 and SPRY4" evidence="3">
    <location>
        <begin position="131"/>
        <end position="142"/>
    </location>
</feature>
<feature type="region of interest" description="Interacts with SPRY1, SPRY2, and SPRY4" evidence="3">
    <location>
        <begin position="149"/>
        <end position="160"/>
    </location>
</feature>
<feature type="region of interest" description="Interacts with SPRY1, SPRY2, SPRY3 and SPRY4" evidence="3">
    <location>
        <begin position="167"/>
        <end position="178"/>
    </location>
</feature>
<feature type="modified residue" description="N-acetylserine" evidence="4">
    <location>
        <position position="2"/>
    </location>
</feature>
<feature type="modified residue" description="Phosphoserine" evidence="2">
    <location>
        <position position="2"/>
    </location>
</feature>
<feature type="modified residue" description="N6-acetyllysine; alternate" evidence="4">
    <location>
        <position position="5"/>
    </location>
</feature>
<feature type="modified residue" description="Phosphotyrosine" evidence="4">
    <location>
        <position position="6"/>
    </location>
</feature>
<feature type="modified residue" description="Phosphoserine" evidence="3">
    <location>
        <position position="9"/>
    </location>
</feature>
<feature type="modified residue" description="Phosphotyrosine; by ABL1" evidence="3">
    <location>
        <position position="14"/>
    </location>
</feature>
<feature type="modified residue" description="Phosphotyrosine" evidence="4">
    <location>
        <position position="25"/>
    </location>
</feature>
<feature type="modified residue" description="Phosphoserine" evidence="4">
    <location>
        <position position="37"/>
    </location>
</feature>
<feature type="lipid moiety-binding region" description="S-palmitoyl cysteine" evidence="1">
    <location>
        <position position="133"/>
    </location>
</feature>
<feature type="lipid moiety-binding region" description="S-palmitoyl cysteine" evidence="1">
    <location>
        <position position="143"/>
    </location>
</feature>
<feature type="lipid moiety-binding region" description="S-palmitoyl cysteine" evidence="1">
    <location>
        <position position="156"/>
    </location>
</feature>
<feature type="cross-link" description="Glycyl lysine isopeptide (Lys-Gly) (interchain with G-Cter in ubiquitin); alternate" evidence="4">
    <location>
        <position position="5"/>
    </location>
</feature>
<feature type="cross-link" description="Glycyl lysine isopeptide (Lys-Gly) (interchain with G-Cter in ubiquitin)" evidence="4">
    <location>
        <position position="26"/>
    </location>
</feature>
<feature type="cross-link" description="Glycyl lysine isopeptide (Lys-Gly) (interchain with G-Cter in ubiquitin)" evidence="4">
    <location>
        <position position="30"/>
    </location>
</feature>
<feature type="cross-link" description="Glycyl lysine isopeptide (Lys-Gly) (interchain with G-Cter in ubiquitin)" evidence="4">
    <location>
        <position position="39"/>
    </location>
</feature>
<feature type="cross-link" description="Glycyl lysine isopeptide (Lys-Gly) (interchain with G-Cter in ubiquitin)" evidence="4">
    <location>
        <position position="47"/>
    </location>
</feature>
<feature type="cross-link" description="Glycyl lysine isopeptide (Lys-Gly) (interchain with G-Cter in ubiquitin)" evidence="4">
    <location>
        <position position="57"/>
    </location>
</feature>
<name>CAV1_CALJA</name>
<keyword id="KW-0007">Acetylation</keyword>
<keyword id="KW-1003">Cell membrane</keyword>
<keyword id="KW-0333">Golgi apparatus</keyword>
<keyword id="KW-1017">Isopeptide bond</keyword>
<keyword id="KW-0449">Lipoprotein</keyword>
<keyword id="KW-0472">Membrane</keyword>
<keyword id="KW-0564">Palmitate</keyword>
<keyword id="KW-0597">Phosphoprotein</keyword>
<keyword id="KW-1185">Reference proteome</keyword>
<keyword id="KW-0832">Ubl conjugation</keyword>
<evidence type="ECO:0000250" key="1"/>
<evidence type="ECO:0000250" key="2">
    <source>
        <dbReference type="UniProtKB" id="P41350"/>
    </source>
</evidence>
<evidence type="ECO:0000250" key="3">
    <source>
        <dbReference type="UniProtKB" id="P49817"/>
    </source>
</evidence>
<evidence type="ECO:0000250" key="4">
    <source>
        <dbReference type="UniProtKB" id="Q03135"/>
    </source>
</evidence>
<evidence type="ECO:0000250" key="5">
    <source>
        <dbReference type="UniProtKB" id="Q2IBA5"/>
    </source>
</evidence>
<evidence type="ECO:0000255" key="6"/>
<evidence type="ECO:0000305" key="7"/>
<protein>
    <recommendedName>
        <fullName>Caveolin-1</fullName>
    </recommendedName>
</protein>
<comment type="function">
    <text evidence="3 4">May act as a scaffolding protein within caveolar membranes. Forms a stable heterooligomeric complex with CAV2 that targets to lipid rafts and drives caveolae formation. Mediates the recruitment of CAVIN proteins (CAVIN1/2/3/4) to the caveolae (By similarity). Interacts directly with G-protein alpha subunits and can functionally regulate their activity (By similarity). Involved in the costimulatory signal essential for T-cell receptor (TCR)-mediated T-cell activation. Its binding to DPP4 induces T-cell proliferation and NF-kappa-B activation in a T-cell receptor/CD3-dependent manner (By similarity). Recruits CTNNB1 to caveolar membranes and may regulate CTNNB1-mediated signaling through the Wnt pathway (By similarity). Negatively regulates TGFB1-mediated activation of SMAD2/3 by mediating the internalization of TGFBR1 from membrane rafts leading to its subsequent degradation (By similarity). Binds 20(S)-hydroxycholesterol (20(S)-OHC) (By similarity).</text>
</comment>
<comment type="subunit">
    <text evidence="2 3 4 5">Homooligomer. Interacts with GLIPR2. Interacts with NOSTRIN (By similarity). Interacts with SNAP25 and STX1A (By similarity). Interacts (via the N-terminus) with DPP4; the interaction is direct (By similarity). Interacts with CTNNB1, CDH1 and JUP. Interacts with PACSIN2; this interaction induces membrane tubulation (By similarity). Interacts with SLC7A9 (By similarity). Interacts with BMX and BTK. Interacts with TGFBR1. Interacts with CAVIN3 (via leucine-zipper domain) in a cholesterol-sensitive manner. Interacts with CAVIN1. Interacts with EHD2 in a cholesterol-dependent manner. Forms a ternary complex with UBXN6 and VCP; mediates CAV1 targeting to lysosomes for degradation. Interacts with ABCG1; this interaction regulates ABCG1-mediated cholesterol efflux (By similarity). Interacts with NEU3; this interaction enhances NEU3 sialidase activity within caveola. Interacts (via C-terminus) with SPRY1, SPRY2 (via C-terminus), SPRY3, and SPRY4 (By similarity). Interacts with IGFBP5; this interaction allows trafficking of IGFBP5 from the plasma membrane to the nucleus (By similarity).</text>
</comment>
<comment type="subcellular location">
    <subcellularLocation>
        <location evidence="1">Golgi apparatus membrane</location>
        <topology evidence="1">Peripheral membrane protein</topology>
    </subcellularLocation>
    <subcellularLocation>
        <location evidence="1">Cell membrane</location>
        <topology evidence="1">Peripheral membrane protein</topology>
    </subcellularLocation>
    <subcellularLocation>
        <location evidence="3">Membrane</location>
        <location evidence="3">Caveola</location>
        <topology evidence="1">Peripheral membrane protein</topology>
    </subcellularLocation>
    <subcellularLocation>
        <location evidence="4">Membrane raft</location>
    </subcellularLocation>
    <text evidence="1">Colocalized with DPP4 in membrane rafts. Potential hairpin-like structure in the membrane. Membrane protein of caveolae (By similarity).</text>
</comment>
<comment type="PTM">
    <text evidence="4">Phosphorylated at Tyr-14 by ABL1 in response to oxidative stress.</text>
</comment>
<comment type="PTM">
    <text evidence="4">Ubiquitinated. Undergo monoubiquitination and multi- and/or polyubiquitination. Monoubiquitination of N-terminal lysines promotes integration in a ternary complex with UBXN6 and VCP which promotes oligomeric CAV1 targeting to lysosomes for degradation. Ubiquitinated by ZNRF1; leading to degradation and modulation of the TLR4-mediated immune response.</text>
</comment>
<comment type="similarity">
    <text evidence="7">Belongs to the caveolin family.</text>
</comment>
<organism>
    <name type="scientific">Callithrix jacchus</name>
    <name type="common">White-tufted-ear marmoset</name>
    <dbReference type="NCBI Taxonomy" id="9483"/>
    <lineage>
        <taxon>Eukaryota</taxon>
        <taxon>Metazoa</taxon>
        <taxon>Chordata</taxon>
        <taxon>Craniata</taxon>
        <taxon>Vertebrata</taxon>
        <taxon>Euteleostomi</taxon>
        <taxon>Mammalia</taxon>
        <taxon>Eutheria</taxon>
        <taxon>Euarchontoglires</taxon>
        <taxon>Primates</taxon>
        <taxon>Haplorrhini</taxon>
        <taxon>Platyrrhini</taxon>
        <taxon>Cebidae</taxon>
        <taxon>Callitrichinae</taxon>
        <taxon>Callithrix</taxon>
        <taxon>Callithrix</taxon>
    </lineage>
</organism>
<reference key="1">
    <citation type="submission" date="2005-10" db="EMBL/GenBank/DDBJ databases">
        <title>NISC comparative sequencing initiative.</title>
        <authorList>
            <person name="Antonellis A."/>
            <person name="Ayele K."/>
            <person name="Benjamin B."/>
            <person name="Blakesley R.W."/>
            <person name="Boakye A."/>
            <person name="Bouffard G.G."/>
            <person name="Brinkley C."/>
            <person name="Brooks S."/>
            <person name="Chu G."/>
            <person name="Coleman H."/>
            <person name="Engle J."/>
            <person name="Gestole M."/>
            <person name="Greene A."/>
            <person name="Guan X."/>
            <person name="Gupta J."/>
            <person name="Haghighi P."/>
            <person name="Han J."/>
            <person name="Hansen N."/>
            <person name="Ho S.-L."/>
            <person name="Hu P."/>
            <person name="Hunter G."/>
            <person name="Hurle B."/>
            <person name="Idol J.R."/>
            <person name="Kwong P."/>
            <person name="Laric P."/>
            <person name="Larson S."/>
            <person name="Lee-Lin S.-Q."/>
            <person name="Legaspi R."/>
            <person name="Madden M."/>
            <person name="Maduro Q.L."/>
            <person name="Maduro V.B."/>
            <person name="Margulies E.H."/>
            <person name="Masiello C."/>
            <person name="Maskeri B."/>
            <person name="McDowell J."/>
            <person name="Mojidi H.A."/>
            <person name="Mullikin J.C."/>
            <person name="Oestreicher J.S."/>
            <person name="Park M."/>
            <person name="Portnoy M.E."/>
            <person name="Prasad A."/>
            <person name="Puri O."/>
            <person name="Reddix-Dugue N."/>
            <person name="Schandler K."/>
            <person name="Schueler M.G."/>
            <person name="Sison C."/>
            <person name="Stantripop S."/>
            <person name="Stephen E."/>
            <person name="Taye A."/>
            <person name="Thomas J.W."/>
            <person name="Thomas P.J."/>
            <person name="Tsipouri V."/>
            <person name="Ung L."/>
            <person name="Vogt J.L."/>
            <person name="Wetherby K.D."/>
            <person name="Young A."/>
            <person name="Green E.D."/>
        </authorList>
    </citation>
    <scope>NUCLEOTIDE SEQUENCE [LARGE SCALE GENOMIC DNA]</scope>
</reference>
<proteinExistence type="inferred from homology"/>